<feature type="chain" id="PRO_0000266265" description="CTP synthase">
    <location>
        <begin position="1"/>
        <end position="554"/>
    </location>
</feature>
<feature type="domain" description="Glutamine amidotransferase type-1" evidence="1">
    <location>
        <begin position="292"/>
        <end position="545"/>
    </location>
</feature>
<feature type="region of interest" description="Amidoligase domain" evidence="1">
    <location>
        <begin position="1"/>
        <end position="265"/>
    </location>
</feature>
<feature type="active site" description="Nucleophile; for glutamine hydrolysis" evidence="1">
    <location>
        <position position="380"/>
    </location>
</feature>
<feature type="active site" evidence="1">
    <location>
        <position position="518"/>
    </location>
</feature>
<feature type="active site" evidence="1">
    <location>
        <position position="520"/>
    </location>
</feature>
<feature type="binding site" evidence="1">
    <location>
        <position position="13"/>
    </location>
    <ligand>
        <name>CTP</name>
        <dbReference type="ChEBI" id="CHEBI:37563"/>
        <note>allosteric inhibitor</note>
    </ligand>
</feature>
<feature type="binding site" evidence="1">
    <location>
        <position position="13"/>
    </location>
    <ligand>
        <name>UTP</name>
        <dbReference type="ChEBI" id="CHEBI:46398"/>
    </ligand>
</feature>
<feature type="binding site" evidence="1">
    <location>
        <begin position="14"/>
        <end position="19"/>
    </location>
    <ligand>
        <name>ATP</name>
        <dbReference type="ChEBI" id="CHEBI:30616"/>
    </ligand>
</feature>
<feature type="binding site" evidence="1">
    <location>
        <position position="71"/>
    </location>
    <ligand>
        <name>ATP</name>
        <dbReference type="ChEBI" id="CHEBI:30616"/>
    </ligand>
</feature>
<feature type="binding site" evidence="1">
    <location>
        <position position="71"/>
    </location>
    <ligand>
        <name>Mg(2+)</name>
        <dbReference type="ChEBI" id="CHEBI:18420"/>
    </ligand>
</feature>
<feature type="binding site" evidence="1">
    <location>
        <position position="139"/>
    </location>
    <ligand>
        <name>Mg(2+)</name>
        <dbReference type="ChEBI" id="CHEBI:18420"/>
    </ligand>
</feature>
<feature type="binding site" evidence="1">
    <location>
        <begin position="146"/>
        <end position="148"/>
    </location>
    <ligand>
        <name>CTP</name>
        <dbReference type="ChEBI" id="CHEBI:37563"/>
        <note>allosteric inhibitor</note>
    </ligand>
</feature>
<feature type="binding site" evidence="1">
    <location>
        <begin position="186"/>
        <end position="191"/>
    </location>
    <ligand>
        <name>CTP</name>
        <dbReference type="ChEBI" id="CHEBI:37563"/>
        <note>allosteric inhibitor</note>
    </ligand>
</feature>
<feature type="binding site" evidence="1">
    <location>
        <begin position="186"/>
        <end position="191"/>
    </location>
    <ligand>
        <name>UTP</name>
        <dbReference type="ChEBI" id="CHEBI:46398"/>
    </ligand>
</feature>
<feature type="binding site" evidence="1">
    <location>
        <position position="222"/>
    </location>
    <ligand>
        <name>CTP</name>
        <dbReference type="ChEBI" id="CHEBI:37563"/>
        <note>allosteric inhibitor</note>
    </ligand>
</feature>
<feature type="binding site" evidence="1">
    <location>
        <position position="222"/>
    </location>
    <ligand>
        <name>UTP</name>
        <dbReference type="ChEBI" id="CHEBI:46398"/>
    </ligand>
</feature>
<feature type="binding site" evidence="1">
    <location>
        <position position="353"/>
    </location>
    <ligand>
        <name>L-glutamine</name>
        <dbReference type="ChEBI" id="CHEBI:58359"/>
    </ligand>
</feature>
<feature type="binding site" evidence="1">
    <location>
        <begin position="381"/>
        <end position="384"/>
    </location>
    <ligand>
        <name>L-glutamine</name>
        <dbReference type="ChEBI" id="CHEBI:58359"/>
    </ligand>
</feature>
<feature type="binding site" evidence="1">
    <location>
        <position position="404"/>
    </location>
    <ligand>
        <name>L-glutamine</name>
        <dbReference type="ChEBI" id="CHEBI:58359"/>
    </ligand>
</feature>
<feature type="binding site" evidence="1">
    <location>
        <position position="471"/>
    </location>
    <ligand>
        <name>L-glutamine</name>
        <dbReference type="ChEBI" id="CHEBI:58359"/>
    </ligand>
</feature>
<keyword id="KW-0067">ATP-binding</keyword>
<keyword id="KW-0315">Glutamine amidotransferase</keyword>
<keyword id="KW-0436">Ligase</keyword>
<keyword id="KW-0460">Magnesium</keyword>
<keyword id="KW-0479">Metal-binding</keyword>
<keyword id="KW-0547">Nucleotide-binding</keyword>
<keyword id="KW-0665">Pyrimidine biosynthesis</keyword>
<keyword id="KW-1185">Reference proteome</keyword>
<accession>Q5GYK0</accession>
<name>PYRG_XANOR</name>
<protein>
    <recommendedName>
        <fullName evidence="1">CTP synthase</fullName>
        <ecNumber evidence="1">6.3.4.2</ecNumber>
    </recommendedName>
    <alternativeName>
        <fullName evidence="1">Cytidine 5'-triphosphate synthase</fullName>
    </alternativeName>
    <alternativeName>
        <fullName evidence="1">Cytidine triphosphate synthetase</fullName>
        <shortName evidence="1">CTP synthetase</shortName>
        <shortName evidence="1">CTPS</shortName>
    </alternativeName>
    <alternativeName>
        <fullName evidence="1">UTP--ammonia ligase</fullName>
    </alternativeName>
</protein>
<reference key="1">
    <citation type="journal article" date="2005" name="Nucleic Acids Res.">
        <title>The genome sequence of Xanthomonas oryzae pathovar oryzae KACC10331, the bacterial blight pathogen of rice.</title>
        <authorList>
            <person name="Lee B.-M."/>
            <person name="Park Y.-J."/>
            <person name="Park D.-S."/>
            <person name="Kang H.-W."/>
            <person name="Kim J.-G."/>
            <person name="Song E.-S."/>
            <person name="Park I.-C."/>
            <person name="Yoon U.-H."/>
            <person name="Hahn J.-H."/>
            <person name="Koo B.-S."/>
            <person name="Lee G.-B."/>
            <person name="Kim H."/>
            <person name="Park H.-S."/>
            <person name="Yoon K.-O."/>
            <person name="Kim J.-H."/>
            <person name="Jung C.-H."/>
            <person name="Koh N.-H."/>
            <person name="Seo J.-S."/>
            <person name="Go S.-J."/>
        </authorList>
    </citation>
    <scope>NUCLEOTIDE SEQUENCE [LARGE SCALE GENOMIC DNA]</scope>
    <source>
        <strain>KACC10331 / KXO85</strain>
    </source>
</reference>
<evidence type="ECO:0000255" key="1">
    <source>
        <dbReference type="HAMAP-Rule" id="MF_01227"/>
    </source>
</evidence>
<evidence type="ECO:0000305" key="2"/>
<proteinExistence type="inferred from homology"/>
<organism>
    <name type="scientific">Xanthomonas oryzae pv. oryzae (strain KACC10331 / KXO85)</name>
    <dbReference type="NCBI Taxonomy" id="291331"/>
    <lineage>
        <taxon>Bacteria</taxon>
        <taxon>Pseudomonadati</taxon>
        <taxon>Pseudomonadota</taxon>
        <taxon>Gammaproteobacteria</taxon>
        <taxon>Lysobacterales</taxon>
        <taxon>Lysobacteraceae</taxon>
        <taxon>Xanthomonas</taxon>
    </lineage>
</organism>
<comment type="function">
    <text evidence="1">Catalyzes the ATP-dependent amination of UTP to CTP with either L-glutamine or ammonia as the source of nitrogen. Regulates intracellular CTP levels through interactions with the four ribonucleotide triphosphates.</text>
</comment>
<comment type="catalytic activity">
    <reaction evidence="1">
        <text>UTP + L-glutamine + ATP + H2O = CTP + L-glutamate + ADP + phosphate + 2 H(+)</text>
        <dbReference type="Rhea" id="RHEA:26426"/>
        <dbReference type="ChEBI" id="CHEBI:15377"/>
        <dbReference type="ChEBI" id="CHEBI:15378"/>
        <dbReference type="ChEBI" id="CHEBI:29985"/>
        <dbReference type="ChEBI" id="CHEBI:30616"/>
        <dbReference type="ChEBI" id="CHEBI:37563"/>
        <dbReference type="ChEBI" id="CHEBI:43474"/>
        <dbReference type="ChEBI" id="CHEBI:46398"/>
        <dbReference type="ChEBI" id="CHEBI:58359"/>
        <dbReference type="ChEBI" id="CHEBI:456216"/>
        <dbReference type="EC" id="6.3.4.2"/>
    </reaction>
</comment>
<comment type="catalytic activity">
    <reaction evidence="1">
        <text>L-glutamine + H2O = L-glutamate + NH4(+)</text>
        <dbReference type="Rhea" id="RHEA:15889"/>
        <dbReference type="ChEBI" id="CHEBI:15377"/>
        <dbReference type="ChEBI" id="CHEBI:28938"/>
        <dbReference type="ChEBI" id="CHEBI:29985"/>
        <dbReference type="ChEBI" id="CHEBI:58359"/>
    </reaction>
</comment>
<comment type="catalytic activity">
    <reaction evidence="1">
        <text>UTP + NH4(+) + ATP = CTP + ADP + phosphate + 2 H(+)</text>
        <dbReference type="Rhea" id="RHEA:16597"/>
        <dbReference type="ChEBI" id="CHEBI:15378"/>
        <dbReference type="ChEBI" id="CHEBI:28938"/>
        <dbReference type="ChEBI" id="CHEBI:30616"/>
        <dbReference type="ChEBI" id="CHEBI:37563"/>
        <dbReference type="ChEBI" id="CHEBI:43474"/>
        <dbReference type="ChEBI" id="CHEBI:46398"/>
        <dbReference type="ChEBI" id="CHEBI:456216"/>
    </reaction>
</comment>
<comment type="activity regulation">
    <text evidence="1">Allosterically activated by GTP, when glutamine is the substrate; GTP has no effect on the reaction when ammonia is the substrate. The allosteric effector GTP functions by stabilizing the protein conformation that binds the tetrahedral intermediate(s) formed during glutamine hydrolysis. Inhibited by the product CTP, via allosteric rather than competitive inhibition.</text>
</comment>
<comment type="pathway">
    <text evidence="1">Pyrimidine metabolism; CTP biosynthesis via de novo pathway; CTP from UDP: step 2/2.</text>
</comment>
<comment type="subunit">
    <text evidence="1">Homotetramer.</text>
</comment>
<comment type="miscellaneous">
    <text evidence="1">CTPSs have evolved a hybrid strategy for distinguishing between UTP and CTP. The overlapping regions of the product feedback inhibitory and substrate sites recognize a common feature in both compounds, the triphosphate moiety. To differentiate isosteric substrate and product pyrimidine rings, an additional pocket far from the expected kinase/ligase catalytic site, specifically recognizes the cytosine and ribose portions of the product inhibitor.</text>
</comment>
<comment type="similarity">
    <text evidence="1">Belongs to the CTP synthase family.</text>
</comment>
<comment type="sequence caution" evidence="2">
    <conflict type="erroneous initiation">
        <sequence resource="EMBL-CDS" id="AAW76221"/>
    </conflict>
</comment>
<gene>
    <name evidence="1" type="primary">pyrG</name>
    <name type="ordered locus">XOO2967</name>
</gene>
<sequence>MTPLIFVTGGVVSSLGKGIAAASLASILEARGLKVTMMKLDPYINVDPGTMSPFQHGEVYVTDDGAETDLDLGHYERYVRTRLSRKNSVTTGRIYENVIRKERRGDYLGATVQVIPHITDEIRRCIDEATAGFDVALIEIGGTVGDIESLPFLEAIRQVRTERGAEKAMFMHLTLVPYIAAAGELKTKPTQHSVKELRSIGIQPDVLLCRSEQAVPDSERRKIALFTNVSERAVISCPDIDVLYGMPLELLRQGLDELVIVQFKLRDKVAAADLSEWAAVVDAVKHPLDEVTIAVVGKYVDHQDAYKSVAEALRHGGLRQRTKVNLKWLEAQDLERSDMAALQDIDGILVPGGFGDRGFEGKVQTSKFAREHKVPYFGICYGMQAAVVDYARHVADLDAANSTENDRQSPHPVIGLITEWRTATGEVEKRDEKSDLGGTMRLGLQEQRLKPGTLARELYGKDVVAERHRHRYEFNNRYRTQLEDAGLVISGKSMDDTLVEVVELPRDTHPWFLACQAHPEFLSTPRDGHPLFIGFVRAAREKKAGGKLLKEARA</sequence>
<dbReference type="EC" id="6.3.4.2" evidence="1"/>
<dbReference type="EMBL" id="AE013598">
    <property type="protein sequence ID" value="AAW76221.1"/>
    <property type="status" value="ALT_INIT"/>
    <property type="molecule type" value="Genomic_DNA"/>
</dbReference>
<dbReference type="SMR" id="Q5GYK0"/>
<dbReference type="STRING" id="291331.XOO2967"/>
<dbReference type="MEROPS" id="C26.964"/>
<dbReference type="KEGG" id="xoo:XOO2967"/>
<dbReference type="HOGENOM" id="CLU_011675_5_0_6"/>
<dbReference type="UniPathway" id="UPA00159">
    <property type="reaction ID" value="UER00277"/>
</dbReference>
<dbReference type="Proteomes" id="UP000006735">
    <property type="component" value="Chromosome"/>
</dbReference>
<dbReference type="GO" id="GO:0005829">
    <property type="term" value="C:cytosol"/>
    <property type="evidence" value="ECO:0007669"/>
    <property type="project" value="TreeGrafter"/>
</dbReference>
<dbReference type="GO" id="GO:0005524">
    <property type="term" value="F:ATP binding"/>
    <property type="evidence" value="ECO:0007669"/>
    <property type="project" value="UniProtKB-KW"/>
</dbReference>
<dbReference type="GO" id="GO:0003883">
    <property type="term" value="F:CTP synthase activity"/>
    <property type="evidence" value="ECO:0007669"/>
    <property type="project" value="UniProtKB-UniRule"/>
</dbReference>
<dbReference type="GO" id="GO:0004359">
    <property type="term" value="F:glutaminase activity"/>
    <property type="evidence" value="ECO:0007669"/>
    <property type="project" value="RHEA"/>
</dbReference>
<dbReference type="GO" id="GO:0042802">
    <property type="term" value="F:identical protein binding"/>
    <property type="evidence" value="ECO:0007669"/>
    <property type="project" value="TreeGrafter"/>
</dbReference>
<dbReference type="GO" id="GO:0046872">
    <property type="term" value="F:metal ion binding"/>
    <property type="evidence" value="ECO:0007669"/>
    <property type="project" value="UniProtKB-KW"/>
</dbReference>
<dbReference type="GO" id="GO:0044210">
    <property type="term" value="P:'de novo' CTP biosynthetic process"/>
    <property type="evidence" value="ECO:0007669"/>
    <property type="project" value="UniProtKB-UniRule"/>
</dbReference>
<dbReference type="GO" id="GO:0019856">
    <property type="term" value="P:pyrimidine nucleobase biosynthetic process"/>
    <property type="evidence" value="ECO:0007669"/>
    <property type="project" value="TreeGrafter"/>
</dbReference>
<dbReference type="CDD" id="cd03113">
    <property type="entry name" value="CTPS_N"/>
    <property type="match status" value="1"/>
</dbReference>
<dbReference type="CDD" id="cd01746">
    <property type="entry name" value="GATase1_CTP_Synthase"/>
    <property type="match status" value="1"/>
</dbReference>
<dbReference type="FunFam" id="3.40.50.300:FF:000009">
    <property type="entry name" value="CTP synthase"/>
    <property type="match status" value="1"/>
</dbReference>
<dbReference type="FunFam" id="3.40.50.880:FF:000002">
    <property type="entry name" value="CTP synthase"/>
    <property type="match status" value="1"/>
</dbReference>
<dbReference type="Gene3D" id="3.40.50.880">
    <property type="match status" value="1"/>
</dbReference>
<dbReference type="Gene3D" id="3.40.50.300">
    <property type="entry name" value="P-loop containing nucleotide triphosphate hydrolases"/>
    <property type="match status" value="1"/>
</dbReference>
<dbReference type="HAMAP" id="MF_01227">
    <property type="entry name" value="PyrG"/>
    <property type="match status" value="1"/>
</dbReference>
<dbReference type="InterPro" id="IPR029062">
    <property type="entry name" value="Class_I_gatase-like"/>
</dbReference>
<dbReference type="InterPro" id="IPR004468">
    <property type="entry name" value="CTP_synthase"/>
</dbReference>
<dbReference type="InterPro" id="IPR017456">
    <property type="entry name" value="CTP_synthase_N"/>
</dbReference>
<dbReference type="InterPro" id="IPR017926">
    <property type="entry name" value="GATASE"/>
</dbReference>
<dbReference type="InterPro" id="IPR033828">
    <property type="entry name" value="GATase1_CTP_Synthase"/>
</dbReference>
<dbReference type="InterPro" id="IPR027417">
    <property type="entry name" value="P-loop_NTPase"/>
</dbReference>
<dbReference type="NCBIfam" id="NF003792">
    <property type="entry name" value="PRK05380.1"/>
    <property type="match status" value="1"/>
</dbReference>
<dbReference type="NCBIfam" id="TIGR00337">
    <property type="entry name" value="PyrG"/>
    <property type="match status" value="1"/>
</dbReference>
<dbReference type="PANTHER" id="PTHR11550">
    <property type="entry name" value="CTP SYNTHASE"/>
    <property type="match status" value="1"/>
</dbReference>
<dbReference type="PANTHER" id="PTHR11550:SF0">
    <property type="entry name" value="CTP SYNTHASE-RELATED"/>
    <property type="match status" value="1"/>
</dbReference>
<dbReference type="Pfam" id="PF06418">
    <property type="entry name" value="CTP_synth_N"/>
    <property type="match status" value="1"/>
</dbReference>
<dbReference type="Pfam" id="PF00117">
    <property type="entry name" value="GATase"/>
    <property type="match status" value="1"/>
</dbReference>
<dbReference type="SUPFAM" id="SSF52317">
    <property type="entry name" value="Class I glutamine amidotransferase-like"/>
    <property type="match status" value="1"/>
</dbReference>
<dbReference type="SUPFAM" id="SSF52540">
    <property type="entry name" value="P-loop containing nucleoside triphosphate hydrolases"/>
    <property type="match status" value="1"/>
</dbReference>
<dbReference type="PROSITE" id="PS51273">
    <property type="entry name" value="GATASE_TYPE_1"/>
    <property type="match status" value="1"/>
</dbReference>